<organism>
    <name type="scientific">Trichormus variabilis (strain ATCC 29413 / PCC 7937)</name>
    <name type="common">Anabaena variabilis</name>
    <dbReference type="NCBI Taxonomy" id="240292"/>
    <lineage>
        <taxon>Bacteria</taxon>
        <taxon>Bacillati</taxon>
        <taxon>Cyanobacteriota</taxon>
        <taxon>Cyanophyceae</taxon>
        <taxon>Nostocales</taxon>
        <taxon>Nostocaceae</taxon>
        <taxon>Trichormus</taxon>
    </lineage>
</organism>
<feature type="chain" id="PRO_0000230120" description="Imidazole glycerol phosphate synthase subunit HisF">
    <location>
        <begin position="1"/>
        <end position="257"/>
    </location>
</feature>
<feature type="active site" evidence="1">
    <location>
        <position position="11"/>
    </location>
</feature>
<feature type="active site" evidence="1">
    <location>
        <position position="130"/>
    </location>
</feature>
<protein>
    <recommendedName>
        <fullName evidence="1">Imidazole glycerol phosphate synthase subunit HisF</fullName>
        <ecNumber evidence="1">4.3.2.10</ecNumber>
    </recommendedName>
    <alternativeName>
        <fullName evidence="1">IGP synthase cyclase subunit</fullName>
    </alternativeName>
    <alternativeName>
        <fullName evidence="1">IGP synthase subunit HisF</fullName>
    </alternativeName>
    <alternativeName>
        <fullName evidence="1">ImGP synthase subunit HisF</fullName>
        <shortName evidence="1">IGPS subunit HisF</shortName>
    </alternativeName>
</protein>
<reference key="1">
    <citation type="journal article" date="2014" name="Stand. Genomic Sci.">
        <title>Complete genome sequence of Anabaena variabilis ATCC 29413.</title>
        <authorList>
            <person name="Thiel T."/>
            <person name="Pratte B.S."/>
            <person name="Zhong J."/>
            <person name="Goodwin L."/>
            <person name="Copeland A."/>
            <person name="Lucas S."/>
            <person name="Han C."/>
            <person name="Pitluck S."/>
            <person name="Land M.L."/>
            <person name="Kyrpides N.C."/>
            <person name="Woyke T."/>
        </authorList>
    </citation>
    <scope>NUCLEOTIDE SEQUENCE [LARGE SCALE GENOMIC DNA]</scope>
    <source>
        <strain>ATCC 29413 / PCC 7937</strain>
    </source>
</reference>
<accession>Q3MEF5</accession>
<dbReference type="EC" id="4.3.2.10" evidence="1"/>
<dbReference type="EMBL" id="CP000117">
    <property type="protein sequence ID" value="ABA20631.1"/>
    <property type="molecule type" value="Genomic_DNA"/>
</dbReference>
<dbReference type="SMR" id="Q3MEF5"/>
<dbReference type="STRING" id="240292.Ava_1007"/>
<dbReference type="KEGG" id="ava:Ava_1007"/>
<dbReference type="eggNOG" id="COG0107">
    <property type="taxonomic scope" value="Bacteria"/>
</dbReference>
<dbReference type="HOGENOM" id="CLU_048577_4_0_3"/>
<dbReference type="UniPathway" id="UPA00031">
    <property type="reaction ID" value="UER00010"/>
</dbReference>
<dbReference type="Proteomes" id="UP000002533">
    <property type="component" value="Chromosome"/>
</dbReference>
<dbReference type="GO" id="GO:0005737">
    <property type="term" value="C:cytoplasm"/>
    <property type="evidence" value="ECO:0007669"/>
    <property type="project" value="UniProtKB-SubCell"/>
</dbReference>
<dbReference type="GO" id="GO:0000107">
    <property type="term" value="F:imidazoleglycerol-phosphate synthase activity"/>
    <property type="evidence" value="ECO:0007669"/>
    <property type="project" value="UniProtKB-UniRule"/>
</dbReference>
<dbReference type="GO" id="GO:0016829">
    <property type="term" value="F:lyase activity"/>
    <property type="evidence" value="ECO:0007669"/>
    <property type="project" value="UniProtKB-KW"/>
</dbReference>
<dbReference type="GO" id="GO:0000105">
    <property type="term" value="P:L-histidine biosynthetic process"/>
    <property type="evidence" value="ECO:0007669"/>
    <property type="project" value="UniProtKB-UniRule"/>
</dbReference>
<dbReference type="CDD" id="cd04731">
    <property type="entry name" value="HisF"/>
    <property type="match status" value="1"/>
</dbReference>
<dbReference type="FunFam" id="3.20.20.70:FF:000006">
    <property type="entry name" value="Imidazole glycerol phosphate synthase subunit HisF"/>
    <property type="match status" value="1"/>
</dbReference>
<dbReference type="Gene3D" id="3.20.20.70">
    <property type="entry name" value="Aldolase class I"/>
    <property type="match status" value="1"/>
</dbReference>
<dbReference type="HAMAP" id="MF_01013">
    <property type="entry name" value="HisF"/>
    <property type="match status" value="1"/>
</dbReference>
<dbReference type="InterPro" id="IPR013785">
    <property type="entry name" value="Aldolase_TIM"/>
</dbReference>
<dbReference type="InterPro" id="IPR006062">
    <property type="entry name" value="His_biosynth"/>
</dbReference>
<dbReference type="InterPro" id="IPR004651">
    <property type="entry name" value="HisF"/>
</dbReference>
<dbReference type="InterPro" id="IPR050064">
    <property type="entry name" value="IGPS_HisA/HisF"/>
</dbReference>
<dbReference type="InterPro" id="IPR011060">
    <property type="entry name" value="RibuloseP-bd_barrel"/>
</dbReference>
<dbReference type="NCBIfam" id="TIGR00735">
    <property type="entry name" value="hisF"/>
    <property type="match status" value="1"/>
</dbReference>
<dbReference type="PANTHER" id="PTHR21235:SF2">
    <property type="entry name" value="IMIDAZOLE GLYCEROL PHOSPHATE SYNTHASE HISHF"/>
    <property type="match status" value="1"/>
</dbReference>
<dbReference type="PANTHER" id="PTHR21235">
    <property type="entry name" value="IMIDAZOLE GLYCEROL PHOSPHATE SYNTHASE SUBUNIT HISF/H IGP SYNTHASE SUBUNIT HISF/H"/>
    <property type="match status" value="1"/>
</dbReference>
<dbReference type="Pfam" id="PF00977">
    <property type="entry name" value="His_biosynth"/>
    <property type="match status" value="1"/>
</dbReference>
<dbReference type="SUPFAM" id="SSF51366">
    <property type="entry name" value="Ribulose-phoshate binding barrel"/>
    <property type="match status" value="1"/>
</dbReference>
<comment type="function">
    <text evidence="1">IGPS catalyzes the conversion of PRFAR and glutamine to IGP, AICAR and glutamate. The HisF subunit catalyzes the cyclization activity that produces IGP and AICAR from PRFAR using the ammonia provided by the HisH subunit.</text>
</comment>
<comment type="catalytic activity">
    <reaction evidence="1">
        <text>5-[(5-phospho-1-deoxy-D-ribulos-1-ylimino)methylamino]-1-(5-phospho-beta-D-ribosyl)imidazole-4-carboxamide + L-glutamine = D-erythro-1-(imidazol-4-yl)glycerol 3-phosphate + 5-amino-1-(5-phospho-beta-D-ribosyl)imidazole-4-carboxamide + L-glutamate + H(+)</text>
        <dbReference type="Rhea" id="RHEA:24793"/>
        <dbReference type="ChEBI" id="CHEBI:15378"/>
        <dbReference type="ChEBI" id="CHEBI:29985"/>
        <dbReference type="ChEBI" id="CHEBI:58278"/>
        <dbReference type="ChEBI" id="CHEBI:58359"/>
        <dbReference type="ChEBI" id="CHEBI:58475"/>
        <dbReference type="ChEBI" id="CHEBI:58525"/>
        <dbReference type="EC" id="4.3.2.10"/>
    </reaction>
</comment>
<comment type="pathway">
    <text evidence="1">Amino-acid biosynthesis; L-histidine biosynthesis; L-histidine from 5-phospho-alpha-D-ribose 1-diphosphate: step 5/9.</text>
</comment>
<comment type="subunit">
    <text evidence="1">Heterodimer of HisH and HisF.</text>
</comment>
<comment type="subcellular location">
    <subcellularLocation>
        <location evidence="1">Cytoplasm</location>
    </subcellularLocation>
</comment>
<comment type="similarity">
    <text evidence="1">Belongs to the HisA/HisF family.</text>
</comment>
<gene>
    <name evidence="1" type="primary">hisF</name>
    <name type="ordered locus">Ava_1007</name>
</gene>
<keyword id="KW-0028">Amino-acid biosynthesis</keyword>
<keyword id="KW-0963">Cytoplasm</keyword>
<keyword id="KW-0368">Histidine biosynthesis</keyword>
<keyword id="KW-0456">Lyase</keyword>
<name>HIS6_TRIV2</name>
<proteinExistence type="inferred from homology"/>
<sequence>MLSKRILPCLDVKAGRVVKGVNFVDLKDAGDPVELAKVYNDAGADELVFLDITATHEDRDTIIDVVYRTAEQVFIPLTVGGGIQSLENVKALLRAGADKVSINSAAVRDPELIDRASDRFGNQCIVVAIDARRRVDPSNPGWDVYVRGGRENTGLDALSWAKEVEKRGAGELLVTSMDADGTQAGYDLELTRAIAESVEIPVIASGGAGNCEHIYTALTEGKAEAALLASLLHYGQLSVAEIKNYLRDCQVPVRLYA</sequence>
<evidence type="ECO:0000255" key="1">
    <source>
        <dbReference type="HAMAP-Rule" id="MF_01013"/>
    </source>
</evidence>